<proteinExistence type="inferred from homology"/>
<gene>
    <name evidence="1" type="primary">lgt</name>
    <name type="ordered locus">STY3143</name>
    <name type="ordered locus">t2911</name>
</gene>
<dbReference type="EC" id="2.5.1.145" evidence="1"/>
<dbReference type="EMBL" id="AL513382">
    <property type="protein sequence ID" value="CAD02827.1"/>
    <property type="molecule type" value="Genomic_DNA"/>
</dbReference>
<dbReference type="EMBL" id="AE014613">
    <property type="protein sequence ID" value="AAO70465.1"/>
    <property type="molecule type" value="Genomic_DNA"/>
</dbReference>
<dbReference type="RefSeq" id="NP_457396.1">
    <property type="nucleotide sequence ID" value="NC_003198.1"/>
</dbReference>
<dbReference type="RefSeq" id="WP_000204645.1">
    <property type="nucleotide sequence ID" value="NZ_WSUR01000055.1"/>
</dbReference>
<dbReference type="SMR" id="P60958"/>
<dbReference type="STRING" id="220341.gene:17587027"/>
<dbReference type="KEGG" id="stt:t2911"/>
<dbReference type="KEGG" id="sty:STY3143"/>
<dbReference type="PATRIC" id="fig|220341.7.peg.3198"/>
<dbReference type="eggNOG" id="COG0682">
    <property type="taxonomic scope" value="Bacteria"/>
</dbReference>
<dbReference type="HOGENOM" id="CLU_013386_1_0_6"/>
<dbReference type="OMA" id="SIRWYGL"/>
<dbReference type="OrthoDB" id="871140at2"/>
<dbReference type="UniPathway" id="UPA00664"/>
<dbReference type="Proteomes" id="UP000000541">
    <property type="component" value="Chromosome"/>
</dbReference>
<dbReference type="Proteomes" id="UP000002670">
    <property type="component" value="Chromosome"/>
</dbReference>
<dbReference type="GO" id="GO:0005886">
    <property type="term" value="C:plasma membrane"/>
    <property type="evidence" value="ECO:0007669"/>
    <property type="project" value="UniProtKB-SubCell"/>
</dbReference>
<dbReference type="GO" id="GO:0008961">
    <property type="term" value="F:phosphatidylglycerol-prolipoprotein diacylglyceryl transferase activity"/>
    <property type="evidence" value="ECO:0007669"/>
    <property type="project" value="UniProtKB-UniRule"/>
</dbReference>
<dbReference type="GO" id="GO:0042158">
    <property type="term" value="P:lipoprotein biosynthetic process"/>
    <property type="evidence" value="ECO:0007669"/>
    <property type="project" value="UniProtKB-UniRule"/>
</dbReference>
<dbReference type="HAMAP" id="MF_01147">
    <property type="entry name" value="Lgt"/>
    <property type="match status" value="1"/>
</dbReference>
<dbReference type="InterPro" id="IPR001640">
    <property type="entry name" value="Lgt"/>
</dbReference>
<dbReference type="NCBIfam" id="TIGR00544">
    <property type="entry name" value="lgt"/>
    <property type="match status" value="1"/>
</dbReference>
<dbReference type="PANTHER" id="PTHR30589:SF0">
    <property type="entry name" value="PHOSPHATIDYLGLYCEROL--PROLIPOPROTEIN DIACYLGLYCERYL TRANSFERASE"/>
    <property type="match status" value="1"/>
</dbReference>
<dbReference type="PANTHER" id="PTHR30589">
    <property type="entry name" value="PROLIPOPROTEIN DIACYLGLYCERYL TRANSFERASE"/>
    <property type="match status" value="1"/>
</dbReference>
<dbReference type="Pfam" id="PF01790">
    <property type="entry name" value="LGT"/>
    <property type="match status" value="1"/>
</dbReference>
<dbReference type="PROSITE" id="PS01311">
    <property type="entry name" value="LGT"/>
    <property type="match status" value="1"/>
</dbReference>
<accession>P60958</accession>
<accession>Q07293</accession>
<organism>
    <name type="scientific">Salmonella typhi</name>
    <dbReference type="NCBI Taxonomy" id="90370"/>
    <lineage>
        <taxon>Bacteria</taxon>
        <taxon>Pseudomonadati</taxon>
        <taxon>Pseudomonadota</taxon>
        <taxon>Gammaproteobacteria</taxon>
        <taxon>Enterobacterales</taxon>
        <taxon>Enterobacteriaceae</taxon>
        <taxon>Salmonella</taxon>
    </lineage>
</organism>
<reference key="1">
    <citation type="journal article" date="2001" name="Nature">
        <title>Complete genome sequence of a multiple drug resistant Salmonella enterica serovar Typhi CT18.</title>
        <authorList>
            <person name="Parkhill J."/>
            <person name="Dougan G."/>
            <person name="James K.D."/>
            <person name="Thomson N.R."/>
            <person name="Pickard D."/>
            <person name="Wain J."/>
            <person name="Churcher C.M."/>
            <person name="Mungall K.L."/>
            <person name="Bentley S.D."/>
            <person name="Holden M.T.G."/>
            <person name="Sebaihia M."/>
            <person name="Baker S."/>
            <person name="Basham D."/>
            <person name="Brooks K."/>
            <person name="Chillingworth T."/>
            <person name="Connerton P."/>
            <person name="Cronin A."/>
            <person name="Davis P."/>
            <person name="Davies R.M."/>
            <person name="Dowd L."/>
            <person name="White N."/>
            <person name="Farrar J."/>
            <person name="Feltwell T."/>
            <person name="Hamlin N."/>
            <person name="Haque A."/>
            <person name="Hien T.T."/>
            <person name="Holroyd S."/>
            <person name="Jagels K."/>
            <person name="Krogh A."/>
            <person name="Larsen T.S."/>
            <person name="Leather S."/>
            <person name="Moule S."/>
            <person name="O'Gaora P."/>
            <person name="Parry C."/>
            <person name="Quail M.A."/>
            <person name="Rutherford K.M."/>
            <person name="Simmonds M."/>
            <person name="Skelton J."/>
            <person name="Stevens K."/>
            <person name="Whitehead S."/>
            <person name="Barrell B.G."/>
        </authorList>
    </citation>
    <scope>NUCLEOTIDE SEQUENCE [LARGE SCALE GENOMIC DNA]</scope>
    <source>
        <strain>CT18</strain>
    </source>
</reference>
<reference key="2">
    <citation type="journal article" date="2003" name="J. Bacteriol.">
        <title>Comparative genomics of Salmonella enterica serovar Typhi strains Ty2 and CT18.</title>
        <authorList>
            <person name="Deng W."/>
            <person name="Liou S.-R."/>
            <person name="Plunkett G. III"/>
            <person name="Mayhew G.F."/>
            <person name="Rose D.J."/>
            <person name="Burland V."/>
            <person name="Kodoyianni V."/>
            <person name="Schwartz D.C."/>
            <person name="Blattner F.R."/>
        </authorList>
    </citation>
    <scope>NUCLEOTIDE SEQUENCE [LARGE SCALE GENOMIC DNA]</scope>
    <source>
        <strain>ATCC 700931 / Ty2</strain>
    </source>
</reference>
<evidence type="ECO:0000255" key="1">
    <source>
        <dbReference type="HAMAP-Rule" id="MF_01147"/>
    </source>
</evidence>
<evidence type="ECO:0000305" key="2"/>
<protein>
    <recommendedName>
        <fullName evidence="1">Phosphatidylglycerol--prolipoprotein diacylglyceryl transferase</fullName>
        <ecNumber evidence="1">2.5.1.145</ecNumber>
    </recommendedName>
</protein>
<comment type="function">
    <text evidence="1">Catalyzes the transfer of the diacylglyceryl group from phosphatidylglycerol to the sulfhydryl group of the N-terminal cysteine of a prolipoprotein, the first step in the formation of mature lipoproteins.</text>
</comment>
<comment type="catalytic activity">
    <reaction evidence="1">
        <text>L-cysteinyl-[prolipoprotein] + a 1,2-diacyl-sn-glycero-3-phospho-(1'-sn-glycerol) = an S-1,2-diacyl-sn-glyceryl-L-cysteinyl-[prolipoprotein] + sn-glycerol 1-phosphate + H(+)</text>
        <dbReference type="Rhea" id="RHEA:56712"/>
        <dbReference type="Rhea" id="RHEA-COMP:14679"/>
        <dbReference type="Rhea" id="RHEA-COMP:14680"/>
        <dbReference type="ChEBI" id="CHEBI:15378"/>
        <dbReference type="ChEBI" id="CHEBI:29950"/>
        <dbReference type="ChEBI" id="CHEBI:57685"/>
        <dbReference type="ChEBI" id="CHEBI:64716"/>
        <dbReference type="ChEBI" id="CHEBI:140658"/>
        <dbReference type="EC" id="2.5.1.145"/>
    </reaction>
</comment>
<comment type="pathway">
    <text evidence="1">Protein modification; lipoprotein biosynthesis (diacylglyceryl transfer).</text>
</comment>
<comment type="subcellular location">
    <subcellularLocation>
        <location evidence="1">Cell inner membrane</location>
        <topology evidence="1">Multi-pass membrane protein</topology>
    </subcellularLocation>
</comment>
<comment type="similarity">
    <text evidence="1 2">Belongs to the Lgt family.</text>
</comment>
<name>LGT_SALTI</name>
<keyword id="KW-0997">Cell inner membrane</keyword>
<keyword id="KW-1003">Cell membrane</keyword>
<keyword id="KW-0472">Membrane</keyword>
<keyword id="KW-0808">Transferase</keyword>
<keyword id="KW-0812">Transmembrane</keyword>
<keyword id="KW-1133">Transmembrane helix</keyword>
<feature type="chain" id="PRO_0000172667" description="Phosphatidylglycerol--prolipoprotein diacylglyceryl transferase">
    <location>
        <begin position="1"/>
        <end position="291"/>
    </location>
</feature>
<feature type="transmembrane region" description="Helical" evidence="1">
    <location>
        <begin position="21"/>
        <end position="41"/>
    </location>
</feature>
<feature type="transmembrane region" description="Helical" evidence="1">
    <location>
        <begin position="60"/>
        <end position="80"/>
    </location>
</feature>
<feature type="transmembrane region" description="Helical" evidence="1">
    <location>
        <begin position="96"/>
        <end position="116"/>
    </location>
</feature>
<feature type="transmembrane region" description="Helical" evidence="1">
    <location>
        <begin position="130"/>
        <end position="150"/>
    </location>
</feature>
<feature type="transmembrane region" description="Helical" evidence="1">
    <location>
        <begin position="198"/>
        <end position="218"/>
    </location>
</feature>
<feature type="transmembrane region" description="Helical" evidence="1">
    <location>
        <begin position="225"/>
        <end position="245"/>
    </location>
</feature>
<feature type="transmembrane region" description="Helical" evidence="1">
    <location>
        <begin position="260"/>
        <end position="280"/>
    </location>
</feature>
<feature type="binding site" evidence="1">
    <location>
        <position position="143"/>
    </location>
    <ligand>
        <name>a 1,2-diacyl-sn-glycero-3-phospho-(1'-sn-glycerol)</name>
        <dbReference type="ChEBI" id="CHEBI:64716"/>
    </ligand>
</feature>
<sequence>MTSSYLHFPDFDPVIFSIGPVALHWYGLMYLVGFVFAMWLAVRRANRPGSGWTKNEVENLLYAGFLGVFLGGRIGYVLFYNFPLFLDNPLYLFRVWDGGMSFHGGLIGVILVMIIFARRTKRSFFQVSDFIAPLIPFGLGAGRLGNFINGELWGRVDPDFRFAMLFPGSRAEDIALLPSHPQWQPIFDTYGVLPRHPSQLYELALEGVVLFIILNLFIRKPRPMGAVSGLFLIGYGAFRIIVEFFRQPDAQFTGAWVQYISMGQILSIPMIIAGAIMMVWAYRRRPQQHVS</sequence>